<accession>O29072</accession>
<organism>
    <name type="scientific">Archaeoglobus fulgidus (strain ATCC 49558 / DSM 4304 / JCM 9628 / NBRC 100126 / VC-16)</name>
    <dbReference type="NCBI Taxonomy" id="224325"/>
    <lineage>
        <taxon>Archaea</taxon>
        <taxon>Methanobacteriati</taxon>
        <taxon>Methanobacteriota</taxon>
        <taxon>Archaeoglobi</taxon>
        <taxon>Archaeoglobales</taxon>
        <taxon>Archaeoglobaceae</taxon>
        <taxon>Archaeoglobus</taxon>
    </lineage>
</organism>
<name>RFCL_ARCFU</name>
<comment type="function">
    <text evidence="3">Part of the RFC clamp loader complex which loads the PCNA sliding clamp onto DNA. The complex possesses DNA-dependent ATPase activity which is further stimulated by PCNA.</text>
</comment>
<comment type="subunit">
    <text evidence="3">Heteropentamer composed of four small subunits (RfcS) and one large subunit (RfcL). Both subunits interact with PCNA.</text>
</comment>
<comment type="similarity">
    <text evidence="4">Belongs to the activator 1 small subunits family. RfcL subfamily.</text>
</comment>
<reference key="1">
    <citation type="journal article" date="1997" name="Nature">
        <title>The complete genome sequence of the hyperthermophilic, sulphate-reducing archaeon Archaeoglobus fulgidus.</title>
        <authorList>
            <person name="Klenk H.-P."/>
            <person name="Clayton R.A."/>
            <person name="Tomb J.-F."/>
            <person name="White O."/>
            <person name="Nelson K.E."/>
            <person name="Ketchum K.A."/>
            <person name="Dodson R.J."/>
            <person name="Gwinn M.L."/>
            <person name="Hickey E.K."/>
            <person name="Peterson J.D."/>
            <person name="Richardson D.L."/>
            <person name="Kerlavage A.R."/>
            <person name="Graham D.E."/>
            <person name="Kyrpides N.C."/>
            <person name="Fleischmann R.D."/>
            <person name="Quackenbush J."/>
            <person name="Lee N.H."/>
            <person name="Sutton G.G."/>
            <person name="Gill S.R."/>
            <person name="Kirkness E.F."/>
            <person name="Dougherty B.A."/>
            <person name="McKenney K."/>
            <person name="Adams M.D."/>
            <person name="Loftus B.J."/>
            <person name="Peterson S.N."/>
            <person name="Reich C.I."/>
            <person name="McNeil L.K."/>
            <person name="Badger J.H."/>
            <person name="Glodek A."/>
            <person name="Zhou L."/>
            <person name="Overbeek R."/>
            <person name="Gocayne J.D."/>
            <person name="Weidman J.F."/>
            <person name="McDonald L.A."/>
            <person name="Utterback T.R."/>
            <person name="Cotton M.D."/>
            <person name="Spriggs T."/>
            <person name="Artiach P."/>
            <person name="Kaine B.P."/>
            <person name="Sykes S.M."/>
            <person name="Sadow P.W."/>
            <person name="D'Andrea K.P."/>
            <person name="Bowman C."/>
            <person name="Fujii C."/>
            <person name="Garland S.A."/>
            <person name="Mason T.M."/>
            <person name="Olsen G.J."/>
            <person name="Fraser C.M."/>
            <person name="Smith H.O."/>
            <person name="Woese C.R."/>
            <person name="Venter J.C."/>
        </authorList>
    </citation>
    <scope>NUCLEOTIDE SEQUENCE [LARGE SCALE GENOMIC DNA]</scope>
    <source>
        <strain>ATCC 49558 / DSM 4304 / JCM 9628 / NBRC 100126 / VC-16</strain>
    </source>
</reference>
<reference key="2">
    <citation type="journal article" date="2002" name="Nucleic Acids Res.">
        <title>Biochemical characterisation of the clamp/clamp loader proteins from the euryarchaeon Archaeoglobus fulgidus.</title>
        <authorList>
            <person name="Seybert A."/>
            <person name="Scott D.J."/>
            <person name="Scaife S."/>
            <person name="Singleton M.R."/>
            <person name="Wigley D.B."/>
        </authorList>
    </citation>
    <scope>FUNCTION</scope>
    <scope>SUBUNIT</scope>
</reference>
<proteinExistence type="evidence at protein level"/>
<protein>
    <recommendedName>
        <fullName>Replication factor C large subunit</fullName>
        <shortName>RFC large subunit</shortName>
    </recommendedName>
    <alternativeName>
        <fullName>Clamp loader large subunit</fullName>
    </alternativeName>
    <alternativeName>
        <fullName>afRFC large subunit</fullName>
        <shortName>afRFCla</shortName>
    </alternativeName>
</protein>
<dbReference type="EMBL" id="AE000782">
    <property type="protein sequence ID" value="AAB90051.1"/>
    <property type="molecule type" value="Genomic_DNA"/>
</dbReference>
<dbReference type="PIR" id="B69399">
    <property type="entry name" value="B69399"/>
</dbReference>
<dbReference type="RefSeq" id="WP_010878691.1">
    <property type="nucleotide sequence ID" value="NC_000917.1"/>
</dbReference>
<dbReference type="SMR" id="O29072"/>
<dbReference type="STRING" id="224325.AF_1195"/>
<dbReference type="PaxDb" id="224325-AF_1195"/>
<dbReference type="EnsemblBacteria" id="AAB90051">
    <property type="protein sequence ID" value="AAB90051"/>
    <property type="gene ID" value="AF_1195"/>
</dbReference>
<dbReference type="KEGG" id="afu:AF_1195"/>
<dbReference type="eggNOG" id="arCOG00470">
    <property type="taxonomic scope" value="Archaea"/>
</dbReference>
<dbReference type="HOGENOM" id="CLU_027255_1_0_2"/>
<dbReference type="OrthoDB" id="8658at2157"/>
<dbReference type="PhylomeDB" id="O29072"/>
<dbReference type="BRENDA" id="3.6.4.B8">
    <property type="organism ID" value="414"/>
</dbReference>
<dbReference type="Proteomes" id="UP000002199">
    <property type="component" value="Chromosome"/>
</dbReference>
<dbReference type="GO" id="GO:0005524">
    <property type="term" value="F:ATP binding"/>
    <property type="evidence" value="ECO:0007669"/>
    <property type="project" value="UniProtKB-UniRule"/>
</dbReference>
<dbReference type="GO" id="GO:0016887">
    <property type="term" value="F:ATP hydrolysis activity"/>
    <property type="evidence" value="ECO:0007669"/>
    <property type="project" value="InterPro"/>
</dbReference>
<dbReference type="GO" id="GO:0003689">
    <property type="term" value="F:DNA clamp loader activity"/>
    <property type="evidence" value="ECO:0007669"/>
    <property type="project" value="UniProtKB-UniRule"/>
</dbReference>
<dbReference type="GO" id="GO:0006260">
    <property type="term" value="P:DNA replication"/>
    <property type="evidence" value="ECO:0007669"/>
    <property type="project" value="UniProtKB-UniRule"/>
</dbReference>
<dbReference type="CDD" id="cd00009">
    <property type="entry name" value="AAA"/>
    <property type="match status" value="1"/>
</dbReference>
<dbReference type="CDD" id="cd18140">
    <property type="entry name" value="HLD_clamp_RFC"/>
    <property type="match status" value="1"/>
</dbReference>
<dbReference type="Gene3D" id="1.10.8.60">
    <property type="match status" value="1"/>
</dbReference>
<dbReference type="Gene3D" id="3.40.50.300">
    <property type="entry name" value="P-loop containing nucleotide triphosphate hydrolases"/>
    <property type="match status" value="1"/>
</dbReference>
<dbReference type="HAMAP" id="MF_01508">
    <property type="entry name" value="RfcL"/>
    <property type="match status" value="1"/>
</dbReference>
<dbReference type="InterPro" id="IPR003593">
    <property type="entry name" value="AAA+_ATPase"/>
</dbReference>
<dbReference type="InterPro" id="IPR003959">
    <property type="entry name" value="ATPase_AAA_core"/>
</dbReference>
<dbReference type="InterPro" id="IPR027417">
    <property type="entry name" value="P-loop_NTPase"/>
</dbReference>
<dbReference type="InterPro" id="IPR023935">
    <property type="entry name" value="Rep_factor-C_lsu"/>
</dbReference>
<dbReference type="InterPro" id="IPR047854">
    <property type="entry name" value="RFC_lid"/>
</dbReference>
<dbReference type="NCBIfam" id="NF003229">
    <property type="entry name" value="PRK04195.1-5"/>
    <property type="match status" value="1"/>
</dbReference>
<dbReference type="NCBIfam" id="NF003231">
    <property type="entry name" value="PRK04195.2-1"/>
    <property type="match status" value="1"/>
</dbReference>
<dbReference type="NCBIfam" id="NF003234">
    <property type="entry name" value="PRK04195.2-4"/>
    <property type="match status" value="1"/>
</dbReference>
<dbReference type="PANTHER" id="PTHR23389">
    <property type="entry name" value="CHROMOSOME TRANSMISSION FIDELITY FACTOR 18"/>
    <property type="match status" value="1"/>
</dbReference>
<dbReference type="PANTHER" id="PTHR23389:SF6">
    <property type="entry name" value="REPLICATION FACTOR C SUBUNIT 1"/>
    <property type="match status" value="1"/>
</dbReference>
<dbReference type="Pfam" id="PF00004">
    <property type="entry name" value="AAA"/>
    <property type="match status" value="1"/>
</dbReference>
<dbReference type="Pfam" id="PF21960">
    <property type="entry name" value="RCF1-5-like_lid"/>
    <property type="match status" value="1"/>
</dbReference>
<dbReference type="SMART" id="SM00382">
    <property type="entry name" value="AAA"/>
    <property type="match status" value="1"/>
</dbReference>
<dbReference type="SUPFAM" id="SSF52540">
    <property type="entry name" value="P-loop containing nucleoside triphosphate hydrolases"/>
    <property type="match status" value="1"/>
</dbReference>
<feature type="chain" id="PRO_0000135948" description="Replication factor C large subunit">
    <location>
        <begin position="1"/>
        <end position="479"/>
    </location>
</feature>
<feature type="region of interest" description="Disordered" evidence="2">
    <location>
        <begin position="441"/>
        <end position="479"/>
    </location>
</feature>
<feature type="compositionally biased region" description="Basic and acidic residues" evidence="2">
    <location>
        <begin position="452"/>
        <end position="463"/>
    </location>
</feature>
<feature type="binding site" evidence="1">
    <location>
        <begin position="43"/>
        <end position="50"/>
    </location>
    <ligand>
        <name>ATP</name>
        <dbReference type="ChEBI" id="CHEBI:30616"/>
    </ligand>
</feature>
<sequence length="479" mass="55511">MLWVEKYRPKTLEEVVADKSIITRVIKWAKSWKRGSKPLLLAGPPGVGKTSLALALANTMGWEAVELNASDQRSWRVIERIVGEGAFNETISDEGEFLSSRIGKLKLIILDEVDNIHKKEDVGGEAALIRLIKRKPAQPLILIANDPYKLSPELRNLCEMINFKRLTKQQVARVLERIALKEGIKVDKSVLLKIAENAGGDLRAAINDFQALAEGKEELKPEDVFLTKRTQEKDIFRVMQMIFKTKNPAVYNEAMLLDESPEDVIHWVDENLPLEYSGVELVNAYEALSRADIFLGRVRRRQFYRLWKYASYLMTVGVQQMKEEPKKGFTRYRRPAVWQMLFQLRQKREMTRKILEKIGKYSHLSMRKARTEMFPVIKLLLKELDVDKAATIAAFYEFTKEELEFLVGEKGDEIWKYVEKHGMHRIEDETFLESFVKAEKEEKEESVEEVAEEKPEEEREEPRARKKAGKNLTLDSFFS</sequence>
<gene>
    <name type="primary">rfcL</name>
    <name type="ordered locus">AF_1195</name>
</gene>
<keyword id="KW-0067">ATP-binding</keyword>
<keyword id="KW-0235">DNA replication</keyword>
<keyword id="KW-0547">Nucleotide-binding</keyword>
<keyword id="KW-1185">Reference proteome</keyword>
<evidence type="ECO:0000255" key="1"/>
<evidence type="ECO:0000256" key="2">
    <source>
        <dbReference type="SAM" id="MobiDB-lite"/>
    </source>
</evidence>
<evidence type="ECO:0000269" key="3">
    <source>
    </source>
</evidence>
<evidence type="ECO:0000305" key="4"/>